<comment type="function">
    <text evidence="1">Minor protein of the capsid that localizes along the inner surface of the virion, within the central cavities beneath the L1 pentamers. Plays a role in capsid stabilization through interaction with the major capsid protein L1. Once the virion enters the host cell, L2 escorts the genomic DNA into the nucleus by promoting escape from the endosomal compartments and traffic through the host Golgi network. Mechanistically, the C-terminus of L2 possesses a cell-penetrating peptide that protudes from the host endosome, interacts with host cytoplasmic retromer cargo and thereby mediates the capsid delivery to the host trans-Golgi network. Plays a role through its interaction with host dynein in the intracellular microtubule-dependent transport of viral capsid toward the nucleus. Mediates the viral genome import into the nucleus through binding to host importins. Once within the nucleus, L2 localizes viral genomes to host PML bodies in order to activate early gene expression for establishment of infection. Later on, promotes late gene expression by interacting with the viral E2 protein and by inhibiting its transcriptional activation functions. During virion assembly, encapsidates the genome by direct interaction with the viral DNA.</text>
</comment>
<comment type="subunit">
    <text evidence="1">Interacts with major capsid protein L1. Interacts with E2; this interaction inhibits E2 transcriptional activity but not the DNA replication function E2. Interacts with host GADD45GIP1. Interacts with host HSPA8; this interaction is required for L2 nuclear translocation. Interacts with host importins KPNB2 and KPNB3. Forms a complex with importin alpha2-beta1 heterodimers via interaction with the importin alpha2 adapter. Interacts with host DYNLT1; this interaction is essential for virus intracellular transport during entry. Interacts (via C-terminus) with host retromer subunits VPS35 and VPS29.</text>
</comment>
<comment type="subcellular location">
    <subcellularLocation>
        <location evidence="1">Virion</location>
    </subcellularLocation>
    <subcellularLocation>
        <location evidence="1">Host nucleus</location>
    </subcellularLocation>
    <subcellularLocation>
        <location evidence="1">Host early endosome</location>
    </subcellularLocation>
    <subcellularLocation>
        <location evidence="1">Host Golgi apparatus</location>
    </subcellularLocation>
</comment>
<comment type="PTM">
    <text evidence="1">Highly phosphorylated.</text>
</comment>
<comment type="similarity">
    <text evidence="1">Belongs to the papillomaviridae L2 protein family.</text>
</comment>
<accession>P17389</accession>
<protein>
    <recommendedName>
        <fullName evidence="1">Minor capsid protein L2</fullName>
    </recommendedName>
</protein>
<reference key="1">
    <citation type="journal article" date="1989" name="Virology">
        <title>Nucleotide sequence of human papillomavirus type 31: a cervical neoplasia-associated virus.</title>
        <authorList>
            <person name="Goldsborough M.D."/>
            <person name="Disilvestre D."/>
            <person name="Temple G.F."/>
            <person name="Lorincz A.T."/>
        </authorList>
    </citation>
    <scope>NUCLEOTIDE SEQUENCE [GENOMIC DNA]</scope>
</reference>
<sequence length="466" mass="49975">MRSKRSTKRTKRASATQLYQTCKAAGTCPSDVIPKIEHTTIADQILRYGSMGVFFGGLGIGSGSGTGGRTGYVPLSTRPSTVSEASIPIRPPVSIDPVGPLDPSIVSLVEESGIVDVGAPAPIPHPPTTSGFDIATTADTTPAILDVTSVSTHENPTFTDPSVLQPPTPAETSGHLLLSSSSISTHNYEEIPMDTFIVSTNNENITSSTPIPGVRRPARLGLYSKATQQVKVIDPTFLSAPKQLITYENPAYETVNAEESLYFSNTSHNIAPDPDFLDIIALHRPALTSRRNTVRYSRLGNKQTLRTRSGATIGARVHYYYDISSINPAGESIEMQPLGASATTTSTLNDGLYDIYADTDFTVDTPATHNVSPSTAVQSTSAVSAYVPTNTTVPLSTGFDIPIFSGPDVPIEHAPTQVFPFPLAPTTPQVSIFVDGGDFYLHPSYYMLKRRRKRVSYFFTDVSVAA</sequence>
<dbReference type="EMBL" id="J04353">
    <property type="protein sequence ID" value="AAA46955.1"/>
    <property type="molecule type" value="Genomic_DNA"/>
</dbReference>
<dbReference type="PIR" id="H32444">
    <property type="entry name" value="P2WL31"/>
</dbReference>
<dbReference type="Proteomes" id="UP000009116">
    <property type="component" value="Genome"/>
</dbReference>
<dbReference type="GO" id="GO:0043657">
    <property type="term" value="C:host cell"/>
    <property type="evidence" value="ECO:0007669"/>
    <property type="project" value="GOC"/>
</dbReference>
<dbReference type="GO" id="GO:0044174">
    <property type="term" value="C:host cell endosome"/>
    <property type="evidence" value="ECO:0007669"/>
    <property type="project" value="UniProtKB-KW"/>
</dbReference>
<dbReference type="GO" id="GO:0044177">
    <property type="term" value="C:host cell Golgi apparatus"/>
    <property type="evidence" value="ECO:0007669"/>
    <property type="project" value="UniProtKB-SubCell"/>
</dbReference>
<dbReference type="GO" id="GO:0042025">
    <property type="term" value="C:host cell nucleus"/>
    <property type="evidence" value="ECO:0007669"/>
    <property type="project" value="UniProtKB-SubCell"/>
</dbReference>
<dbReference type="GO" id="GO:0019028">
    <property type="term" value="C:viral capsid"/>
    <property type="evidence" value="ECO:0007669"/>
    <property type="project" value="UniProtKB-UniRule"/>
</dbReference>
<dbReference type="GO" id="GO:0003677">
    <property type="term" value="F:DNA binding"/>
    <property type="evidence" value="ECO:0007669"/>
    <property type="project" value="UniProtKB-UniRule"/>
</dbReference>
<dbReference type="GO" id="GO:0005198">
    <property type="term" value="F:structural molecule activity"/>
    <property type="evidence" value="ECO:0007669"/>
    <property type="project" value="UniProtKB-UniRule"/>
</dbReference>
<dbReference type="GO" id="GO:0075521">
    <property type="term" value="P:microtubule-dependent intracellular transport of viral material towards nucleus"/>
    <property type="evidence" value="ECO:0007669"/>
    <property type="project" value="UniProtKB-UniRule"/>
</dbReference>
<dbReference type="GO" id="GO:0046718">
    <property type="term" value="P:symbiont entry into host cell"/>
    <property type="evidence" value="ECO:0007669"/>
    <property type="project" value="UniProtKB-KW"/>
</dbReference>
<dbReference type="GO" id="GO:0075732">
    <property type="term" value="P:viral penetration into host nucleus"/>
    <property type="evidence" value="ECO:0007669"/>
    <property type="project" value="UniProtKB-KW"/>
</dbReference>
<dbReference type="HAMAP" id="MF_04003">
    <property type="entry name" value="PPV_L2"/>
    <property type="match status" value="1"/>
</dbReference>
<dbReference type="InterPro" id="IPR000784">
    <property type="entry name" value="Late_L2"/>
</dbReference>
<dbReference type="Pfam" id="PF00513">
    <property type="entry name" value="Late_protein_L2"/>
    <property type="match status" value="1"/>
</dbReference>
<proteinExistence type="inferred from homology"/>
<gene>
    <name evidence="1" type="primary">L2</name>
</gene>
<organismHost>
    <name type="scientific">Homo sapiens</name>
    <name type="common">Human</name>
    <dbReference type="NCBI Taxonomy" id="9606"/>
</organismHost>
<keyword id="KW-0167">Capsid protein</keyword>
<keyword id="KW-1176">Cytoplasmic inwards viral transport</keyword>
<keyword id="KW-1015">Disulfide bond</keyword>
<keyword id="KW-0238">DNA-binding</keyword>
<keyword id="KW-1039">Host endosome</keyword>
<keyword id="KW-1040">Host Golgi apparatus</keyword>
<keyword id="KW-1048">Host nucleus</keyword>
<keyword id="KW-0945">Host-virus interaction</keyword>
<keyword id="KW-0426">Late protein</keyword>
<keyword id="KW-1177">Microtubular inwards viral transport</keyword>
<keyword id="KW-0597">Phosphoprotein</keyword>
<keyword id="KW-1185">Reference proteome</keyword>
<keyword id="KW-1163">Viral penetration into host nucleus</keyword>
<keyword id="KW-0946">Virion</keyword>
<keyword id="KW-1160">Virus entry into host cell</keyword>
<feature type="chain" id="PRO_0000133598" description="Minor capsid protein L2">
    <location>
        <begin position="1"/>
        <end position="466"/>
    </location>
</feature>
<feature type="short sequence motif" description="Nuclear localization signal" evidence="1">
    <location>
        <begin position="1"/>
        <end position="13"/>
    </location>
</feature>
<feature type="short sequence motif" description="Nuclear localization signal" evidence="1">
    <location>
        <begin position="447"/>
        <end position="455"/>
    </location>
</feature>
<feature type="disulfide bond" evidence="1">
    <location>
        <begin position="22"/>
        <end position="28"/>
    </location>
</feature>
<name>VL2_HPV31</name>
<organism>
    <name type="scientific">Human papillomavirus 31</name>
    <dbReference type="NCBI Taxonomy" id="10585"/>
    <lineage>
        <taxon>Viruses</taxon>
        <taxon>Monodnaviria</taxon>
        <taxon>Shotokuvirae</taxon>
        <taxon>Cossaviricota</taxon>
        <taxon>Papovaviricetes</taxon>
        <taxon>Zurhausenvirales</taxon>
        <taxon>Papillomaviridae</taxon>
        <taxon>Firstpapillomavirinae</taxon>
        <taxon>Alphapapillomavirus</taxon>
        <taxon>Alphapapillomavirus 9</taxon>
    </lineage>
</organism>
<evidence type="ECO:0000255" key="1">
    <source>
        <dbReference type="HAMAP-Rule" id="MF_04003"/>
    </source>
</evidence>